<proteinExistence type="evidence at protein level"/>
<organism>
    <name type="scientific">Homo sapiens</name>
    <name type="common">Human</name>
    <dbReference type="NCBI Taxonomy" id="9606"/>
    <lineage>
        <taxon>Eukaryota</taxon>
        <taxon>Metazoa</taxon>
        <taxon>Chordata</taxon>
        <taxon>Craniata</taxon>
        <taxon>Vertebrata</taxon>
        <taxon>Euteleostomi</taxon>
        <taxon>Mammalia</taxon>
        <taxon>Eutheria</taxon>
        <taxon>Euarchontoglires</taxon>
        <taxon>Primates</taxon>
        <taxon>Haplorrhini</taxon>
        <taxon>Catarrhini</taxon>
        <taxon>Hominidae</taxon>
        <taxon>Homo</taxon>
    </lineage>
</organism>
<sequence length="694" mass="78838">MAKINTQYSHPSRTHLKVKTSDRDLNRAENGLSRAHSSSEETSSVLQPGIAMETRGLADSGQGSFTGQGIARLSRLIFLLRRWAARHVHHQDQGPDSFPDRFRGAELKEVSSQESNAQANVGSQEPADRGRSAWPLAKCNTNTSNNTEEEKKTKKKDAIVVDPSSNLYYRWLTAIALPVFYNWYLLICRACFDELQSEYLMLWLVLDYSADVLYVLDVLVRARTGFLEQGLMVSDTNRLWQHYKTTTQFKLDVLSLVPTDLAYLKVGTNYPEVRFNRLLKFSRLFEFFDRTETRTNYPNMFRIGNLVLYILIIIHWNACIYFAISKFIGFGTDSWVYPNISIPEHGRLSRKYIYSLYWSTLTLTTIGETPPPVKDEEYLFVVVDFLVGVLIFATIVGNVGSMISNMNASRAEFQAKIDSIKQYMQFRKVTKDLETRVIRWFDYLWANKKTVDEKEVLKSLPDKLKAEIAINVHLDTLKKVRIFQDCEAGLLVELVLKLRPTVFSPGDYICKKGDIGKEMYIINEGKLAVVADDGVTQFVVLSDGSYFGEISILNIKGSKSGNRRTANIRSIGYSDLFCLSKDDLMEALTEYPEAKKALEEKGRQILMKDNLIDEELARAGADPKDLEEKVEQLGSSLDTLQTRFARLLAEYNATQMKMKQRLSQLESQVKGGGDKPLADGEVPGDATKTEDKQQ</sequence>
<reference key="1">
    <citation type="journal article" date="1997" name="Eur. J. Neurosci.">
        <title>Cloning, chromosomal localization and functional expression of the gene encoding the alpha-subunit of the cGMP-gated channel in human cone photoreceptors.</title>
        <authorList>
            <person name="Wissinger B."/>
            <person name="Mueller F."/>
            <person name="Weyand I."/>
            <person name="Schuffenhauer S."/>
            <person name="Thanos S."/>
            <person name="Kaupp U.B."/>
            <person name="Zrenner E."/>
        </authorList>
    </citation>
    <scope>NUCLEOTIDE SEQUENCE [MRNA] (ISOFORM 1)</scope>
</reference>
<reference key="2">
    <citation type="journal article" date="2004" name="Nat. Genet.">
        <title>Complete sequencing and characterization of 21,243 full-length human cDNAs.</title>
        <authorList>
            <person name="Ota T."/>
            <person name="Suzuki Y."/>
            <person name="Nishikawa T."/>
            <person name="Otsuki T."/>
            <person name="Sugiyama T."/>
            <person name="Irie R."/>
            <person name="Wakamatsu A."/>
            <person name="Hayashi K."/>
            <person name="Sato H."/>
            <person name="Nagai K."/>
            <person name="Kimura K."/>
            <person name="Makita H."/>
            <person name="Sekine M."/>
            <person name="Obayashi M."/>
            <person name="Nishi T."/>
            <person name="Shibahara T."/>
            <person name="Tanaka T."/>
            <person name="Ishii S."/>
            <person name="Yamamoto J."/>
            <person name="Saito K."/>
            <person name="Kawai Y."/>
            <person name="Isono Y."/>
            <person name="Nakamura Y."/>
            <person name="Nagahari K."/>
            <person name="Murakami K."/>
            <person name="Yasuda T."/>
            <person name="Iwayanagi T."/>
            <person name="Wagatsuma M."/>
            <person name="Shiratori A."/>
            <person name="Sudo H."/>
            <person name="Hosoiri T."/>
            <person name="Kaku Y."/>
            <person name="Kodaira H."/>
            <person name="Kondo H."/>
            <person name="Sugawara M."/>
            <person name="Takahashi M."/>
            <person name="Kanda K."/>
            <person name="Yokoi T."/>
            <person name="Furuya T."/>
            <person name="Kikkawa E."/>
            <person name="Omura Y."/>
            <person name="Abe K."/>
            <person name="Kamihara K."/>
            <person name="Katsuta N."/>
            <person name="Sato K."/>
            <person name="Tanikawa M."/>
            <person name="Yamazaki M."/>
            <person name="Ninomiya K."/>
            <person name="Ishibashi T."/>
            <person name="Yamashita H."/>
            <person name="Murakawa K."/>
            <person name="Fujimori K."/>
            <person name="Tanai H."/>
            <person name="Kimata M."/>
            <person name="Watanabe M."/>
            <person name="Hiraoka S."/>
            <person name="Chiba Y."/>
            <person name="Ishida S."/>
            <person name="Ono Y."/>
            <person name="Takiguchi S."/>
            <person name="Watanabe S."/>
            <person name="Yosida M."/>
            <person name="Hotuta T."/>
            <person name="Kusano J."/>
            <person name="Kanehori K."/>
            <person name="Takahashi-Fujii A."/>
            <person name="Hara H."/>
            <person name="Tanase T.-O."/>
            <person name="Nomura Y."/>
            <person name="Togiya S."/>
            <person name="Komai F."/>
            <person name="Hara R."/>
            <person name="Takeuchi K."/>
            <person name="Arita M."/>
            <person name="Imose N."/>
            <person name="Musashino K."/>
            <person name="Yuuki H."/>
            <person name="Oshima A."/>
            <person name="Sasaki N."/>
            <person name="Aotsuka S."/>
            <person name="Yoshikawa Y."/>
            <person name="Matsunawa H."/>
            <person name="Ichihara T."/>
            <person name="Shiohata N."/>
            <person name="Sano S."/>
            <person name="Moriya S."/>
            <person name="Momiyama H."/>
            <person name="Satoh N."/>
            <person name="Takami S."/>
            <person name="Terashima Y."/>
            <person name="Suzuki O."/>
            <person name="Nakagawa S."/>
            <person name="Senoh A."/>
            <person name="Mizoguchi H."/>
            <person name="Goto Y."/>
            <person name="Shimizu F."/>
            <person name="Wakebe H."/>
            <person name="Hishigaki H."/>
            <person name="Watanabe T."/>
            <person name="Sugiyama A."/>
            <person name="Takemoto M."/>
            <person name="Kawakami B."/>
            <person name="Yamazaki M."/>
            <person name="Watanabe K."/>
            <person name="Kumagai A."/>
            <person name="Itakura S."/>
            <person name="Fukuzumi Y."/>
            <person name="Fujimori Y."/>
            <person name="Komiyama M."/>
            <person name="Tashiro H."/>
            <person name="Tanigami A."/>
            <person name="Fujiwara T."/>
            <person name="Ono T."/>
            <person name="Yamada K."/>
            <person name="Fujii Y."/>
            <person name="Ozaki K."/>
            <person name="Hirao M."/>
            <person name="Ohmori Y."/>
            <person name="Kawabata A."/>
            <person name="Hikiji T."/>
            <person name="Kobatake N."/>
            <person name="Inagaki H."/>
            <person name="Ikema Y."/>
            <person name="Okamoto S."/>
            <person name="Okitani R."/>
            <person name="Kawakami T."/>
            <person name="Noguchi S."/>
            <person name="Itoh T."/>
            <person name="Shigeta K."/>
            <person name="Senba T."/>
            <person name="Matsumura K."/>
            <person name="Nakajima Y."/>
            <person name="Mizuno T."/>
            <person name="Morinaga M."/>
            <person name="Sasaki M."/>
            <person name="Togashi T."/>
            <person name="Oyama M."/>
            <person name="Hata H."/>
            <person name="Watanabe M."/>
            <person name="Komatsu T."/>
            <person name="Mizushima-Sugano J."/>
            <person name="Satoh T."/>
            <person name="Shirai Y."/>
            <person name="Takahashi Y."/>
            <person name="Nakagawa K."/>
            <person name="Okumura K."/>
            <person name="Nagase T."/>
            <person name="Nomura N."/>
            <person name="Kikuchi H."/>
            <person name="Masuho Y."/>
            <person name="Yamashita R."/>
            <person name="Nakai K."/>
            <person name="Yada T."/>
            <person name="Nakamura Y."/>
            <person name="Ohara O."/>
            <person name="Isogai T."/>
            <person name="Sugano S."/>
        </authorList>
    </citation>
    <scope>NUCLEOTIDE SEQUENCE [LARGE SCALE MRNA] (ISOFORM 3)</scope>
</reference>
<reference key="3">
    <citation type="journal article" date="2005" name="Nature">
        <title>Generation and annotation of the DNA sequences of human chromosomes 2 and 4.</title>
        <authorList>
            <person name="Hillier L.W."/>
            <person name="Graves T.A."/>
            <person name="Fulton R.S."/>
            <person name="Fulton L.A."/>
            <person name="Pepin K.H."/>
            <person name="Minx P."/>
            <person name="Wagner-McPherson C."/>
            <person name="Layman D."/>
            <person name="Wylie K."/>
            <person name="Sekhon M."/>
            <person name="Becker M.C."/>
            <person name="Fewell G.A."/>
            <person name="Delehaunty K.D."/>
            <person name="Miner T.L."/>
            <person name="Nash W.E."/>
            <person name="Kremitzki C."/>
            <person name="Oddy L."/>
            <person name="Du H."/>
            <person name="Sun H."/>
            <person name="Bradshaw-Cordum H."/>
            <person name="Ali J."/>
            <person name="Carter J."/>
            <person name="Cordes M."/>
            <person name="Harris A."/>
            <person name="Isak A."/>
            <person name="van Brunt A."/>
            <person name="Nguyen C."/>
            <person name="Du F."/>
            <person name="Courtney L."/>
            <person name="Kalicki J."/>
            <person name="Ozersky P."/>
            <person name="Abbott S."/>
            <person name="Armstrong J."/>
            <person name="Belter E.A."/>
            <person name="Caruso L."/>
            <person name="Cedroni M."/>
            <person name="Cotton M."/>
            <person name="Davidson T."/>
            <person name="Desai A."/>
            <person name="Elliott G."/>
            <person name="Erb T."/>
            <person name="Fronick C."/>
            <person name="Gaige T."/>
            <person name="Haakenson W."/>
            <person name="Haglund K."/>
            <person name="Holmes A."/>
            <person name="Harkins R."/>
            <person name="Kim K."/>
            <person name="Kruchowski S.S."/>
            <person name="Strong C.M."/>
            <person name="Grewal N."/>
            <person name="Goyea E."/>
            <person name="Hou S."/>
            <person name="Levy A."/>
            <person name="Martinka S."/>
            <person name="Mead K."/>
            <person name="McLellan M.D."/>
            <person name="Meyer R."/>
            <person name="Randall-Maher J."/>
            <person name="Tomlinson C."/>
            <person name="Dauphin-Kohlberg S."/>
            <person name="Kozlowicz-Reilly A."/>
            <person name="Shah N."/>
            <person name="Swearengen-Shahid S."/>
            <person name="Snider J."/>
            <person name="Strong J.T."/>
            <person name="Thompson J."/>
            <person name="Yoakum M."/>
            <person name="Leonard S."/>
            <person name="Pearman C."/>
            <person name="Trani L."/>
            <person name="Radionenko M."/>
            <person name="Waligorski J.E."/>
            <person name="Wang C."/>
            <person name="Rock S.M."/>
            <person name="Tin-Wollam A.-M."/>
            <person name="Maupin R."/>
            <person name="Latreille P."/>
            <person name="Wendl M.C."/>
            <person name="Yang S.-P."/>
            <person name="Pohl C."/>
            <person name="Wallis J.W."/>
            <person name="Spieth J."/>
            <person name="Bieri T.A."/>
            <person name="Berkowicz N."/>
            <person name="Nelson J.O."/>
            <person name="Osborne J."/>
            <person name="Ding L."/>
            <person name="Meyer R."/>
            <person name="Sabo A."/>
            <person name="Shotland Y."/>
            <person name="Sinha P."/>
            <person name="Wohldmann P.E."/>
            <person name="Cook L.L."/>
            <person name="Hickenbotham M.T."/>
            <person name="Eldred J."/>
            <person name="Williams D."/>
            <person name="Jones T.A."/>
            <person name="She X."/>
            <person name="Ciccarelli F.D."/>
            <person name="Izaurralde E."/>
            <person name="Taylor J."/>
            <person name="Schmutz J."/>
            <person name="Myers R.M."/>
            <person name="Cox D.R."/>
            <person name="Huang X."/>
            <person name="McPherson J.D."/>
            <person name="Mardis E.R."/>
            <person name="Clifton S.W."/>
            <person name="Warren W.C."/>
            <person name="Chinwalla A.T."/>
            <person name="Eddy S.R."/>
            <person name="Marra M.A."/>
            <person name="Ovcharenko I."/>
            <person name="Furey T.S."/>
            <person name="Miller W."/>
            <person name="Eichler E.E."/>
            <person name="Bork P."/>
            <person name="Suyama M."/>
            <person name="Torrents D."/>
            <person name="Waterston R.H."/>
            <person name="Wilson R.K."/>
        </authorList>
    </citation>
    <scope>NUCLEOTIDE SEQUENCE [LARGE SCALE GENOMIC DNA]</scope>
</reference>
<reference key="4">
    <citation type="journal article" date="2004" name="Genome Res.">
        <title>The status, quality, and expansion of the NIH full-length cDNA project: the Mammalian Gene Collection (MGC).</title>
        <authorList>
            <consortium name="The MGC Project Team"/>
        </authorList>
    </citation>
    <scope>NUCLEOTIDE SEQUENCE [LARGE SCALE MRNA] (ISOFORMS 1 AND 2)</scope>
</reference>
<reference key="5">
    <citation type="journal article" date="1994" name="Neuropharmacology">
        <title>Expression of cyclic nucleotide-gated cation channels in non-sensory tissues and cells.</title>
        <authorList>
            <person name="Distler M."/>
            <person name="Biel M."/>
            <person name="Flockerzi V."/>
            <person name="Hofmann F."/>
        </authorList>
    </citation>
    <scope>NUCLEOTIDE SEQUENCE [GENOMIC DNA] OF 320-580</scope>
</reference>
<reference key="6">
    <citation type="journal article" date="2000" name="Nat. Genet.">
        <title>Genetic basis of total colourblindness among the Pingelapese islanders.</title>
        <authorList>
            <person name="Sundin O.H."/>
            <person name="Yang J.-M."/>
            <person name="Li Y."/>
            <person name="Zhu D."/>
            <person name="Hurd J.N."/>
            <person name="Mitchell T.N."/>
            <person name="Silva E.D."/>
            <person name="Maumenee I.H."/>
        </authorList>
    </citation>
    <scope>FUNCTION</scope>
    <scope>SUBUNIT</scope>
</reference>
<reference key="7">
    <citation type="journal article" date="2001" name="Science">
        <title>Nomenclature for ion channel subunits.</title>
        <authorList>
            <person name="Bradley J."/>
            <person name="Frings S."/>
            <person name="Yau K.W."/>
            <person name="Reed R."/>
        </authorList>
    </citation>
    <scope>NOMENCLATURE</scope>
</reference>
<reference key="8">
    <citation type="journal article" date="2003" name="J. Biol. Chem.">
        <title>Achromatopsia-associated mutation in the human cone photoreceptor cyclic nucleotide-gated channel CNGB3 subunit alters the ligand sensitivity and pore properties of heteromeric channels.</title>
        <authorList>
            <person name="Peng C."/>
            <person name="Rich E.D."/>
            <person name="Varnum M.D."/>
        </authorList>
    </citation>
    <scope>FUNCTION</scope>
    <scope>TRANSPORTER ACTIVITY</scope>
</reference>
<reference key="9">
    <citation type="journal article" date="2004" name="Neuron">
        <title>Subunit configuration of heteromeric cone cyclic nucleotide-gated channels.</title>
        <authorList>
            <person name="Peng C."/>
            <person name="Rich E.D."/>
            <person name="Varnum M.D."/>
        </authorList>
    </citation>
    <scope>SUBUNIT</scope>
</reference>
<reference key="10">
    <citation type="journal article" date="2011" name="Nat. Commun.">
        <title>Molecular mechanism for 3:1 subunit stoichiometry of rod cyclic nucleotide-gated ion channels.</title>
        <authorList>
            <person name="Shuart N.G."/>
            <person name="Haitin Y."/>
            <person name="Camp S.S."/>
            <person name="Black K.D."/>
            <person name="Zagotta W.N."/>
        </authorList>
    </citation>
    <scope>X-RAY CRYSTALLOGRAPHY (1.9 ANGSTROMS) OF 626-669</scope>
    <scope>SUBUNIT STOICHIOMETRY</scope>
    <scope>DOMAIN</scope>
</reference>
<reference key="11">
    <citation type="journal article" date="2022" name="Nat. Struct. Mol. Biol.">
        <title>Structure of the human cone photoreceptor cyclic nucleotide-gated channel.</title>
        <authorList>
            <person name="Zheng X."/>
            <person name="Hu Z."/>
            <person name="Li H."/>
            <person name="Yang J."/>
        </authorList>
    </citation>
    <scope>STRUCTURE BY ELECTRON MICROSCOPY (2.93 ANGSTROMS)</scope>
    <scope>FUNCTION</scope>
    <scope>ACTIVITY REGULATION</scope>
    <scope>SUBUNIT</scope>
    <scope>TOPOLOGY</scope>
    <scope>GLYCOSYLATION AT ASN-339</scope>
    <scope>DOMAIN</scope>
    <scope>SITE</scope>
</reference>
<reference key="12">
    <citation type="journal article" date="2023" name="Nat. Commun.">
        <title>Conformational trajectory of allosteric gating of the human cone photoreceptor cyclic nucleotide-gated channel.</title>
        <authorList>
            <person name="Hu Z."/>
            <person name="Zheng X."/>
            <person name="Yang J."/>
        </authorList>
    </citation>
    <scope>STRUCTURE BY ELECTRON MICROSCOPY (3.11 ANGSTROMS) OF 151-694 IN COMPLEX WITH 3',5'-CYCLIC GMP</scope>
    <scope>FUNCTION</scope>
    <scope>SUBUNIT</scope>
    <scope>DOMAIN</scope>
</reference>
<reference key="13">
    <citation type="journal article" date="1998" name="Nat. Genet.">
        <title>Total colourblindness is caused by mutations in the gene encoding the alpha-subunit of the cone photoreceptor cGMP-gated cation channel.</title>
        <authorList>
            <person name="Kohl S."/>
            <person name="Marx T."/>
            <person name="Giddings I."/>
            <person name="Jaegle H."/>
            <person name="Jacobson S.G."/>
            <person name="Apfelstedt-Sylla E."/>
            <person name="Zrenner E."/>
            <person name="Sharpe L.T."/>
            <person name="Wissinger B."/>
        </authorList>
    </citation>
    <scope>VARIANTS ACHM2 LEU-163; GLN-283; TRP-283; ARG-291; TRP-410; MET-529; LEU-547 AND ARG-557</scope>
    <scope>VARIANT MET-153</scope>
</reference>
<reference key="14">
    <citation type="journal article" date="2001" name="Am. J. Hum. Genet.">
        <title>CNGA3 mutations in hereditary cone photoreceptor disorders.</title>
        <authorList>
            <person name="Wissinger B."/>
            <person name="Gamer D."/>
            <person name="Jaegle H."/>
            <person name="Giorda R."/>
            <person name="Marx T."/>
            <person name="Mayer S."/>
            <person name="Tippmann S."/>
            <person name="Broghammer M."/>
            <person name="Jurklies B."/>
            <person name="Rosenberg T."/>
            <person name="Jacobson S.G."/>
            <person name="Sener E.C."/>
            <person name="Tatlipinar S."/>
            <person name="Hoyng C.B."/>
            <person name="Castellan C."/>
            <person name="Bitoun P."/>
            <person name="Andreasson S."/>
            <person name="Rudolph G."/>
            <person name="Kellner U."/>
            <person name="Lorenz B."/>
            <person name="Wolff G."/>
            <person name="Verellen-Dumoulin C."/>
            <person name="Schwartz M."/>
            <person name="Cremers F.P.M."/>
            <person name="Apfelstedt-Sylla E."/>
            <person name="Zrenner E."/>
            <person name="Salati R."/>
            <person name="Sharpe L.T."/>
            <person name="Kohl S."/>
        </authorList>
    </citation>
    <scope>VARIANTS ACHM2 VAL-162; LEU-163; CYS-181; TYR-182; PHE-186; TYR-191; LYS-194; TRP-223; ARG-224; ASN-260; ASP-267; CYS-277; HIS-277; TRP-283; GLN-283; ARG-291; ILE-312 DEL; PRO-341; SER-369; SER-372; SER-380; THR-406; TRP-410; CYS-427; TRP-436; SER-471; VAL-485; SER-510; GLU-513; GLU-516; THR-522; ASP-525; MET-529; LEU-547; ARG-557; HIS-563; MET-565; HIS-569; CYS-573 AND LYS-593</scope>
</reference>
<reference key="15">
    <citation type="journal article" date="2004" name="J. Med. Genet.">
        <title>Achromatopsia caused by novel mutations in both CNGA3 and CNGB3.</title>
        <authorList>
            <person name="Johnson S."/>
            <person name="Michaelides M."/>
            <person name="Aligianis I.A."/>
            <person name="Ainsworth J.R."/>
            <person name="Mollon J.D."/>
            <person name="Maher E.R."/>
            <person name="Moore A.T."/>
            <person name="Hunt D.M."/>
        </authorList>
    </citation>
    <scope>VARIANTS ACHM2 TRP-223; TRP-436; LEU-547; ARG-548 AND HIS-569</scope>
</reference>
<reference key="16">
    <citation type="journal article" date="2005" name="Am. J. Physiol.">
        <title>Functional consequences of progressive cone dystrophy-associated mutations in the human cone photoreceptor cyclic nucleotide-gated channel CNGA3 subunit.</title>
        <authorList>
            <person name="Liu C."/>
            <person name="Varnum M.D."/>
        </authorList>
    </citation>
    <scope>CHARACTERIZATION OF VARIANTS ACHM2 CYS-277; SER-471 AND HIS-563</scope>
</reference>
<reference key="17">
    <citation type="journal article" date="2005" name="Hum. Mutat.">
        <title>Cone cGMP-gated channel mutations and clinical findings in patients with achromatopsia, macular degeneration, and other hereditary cone diseases.</title>
        <authorList>
            <person name="Nishiguchi K.M."/>
            <person name="Sandberg M.A."/>
            <person name="Gorji N."/>
            <person name="Berson E.L."/>
            <person name="Dryja T.P."/>
        </authorList>
    </citation>
    <scope>VARIANTS ACHM2 TRP-223; SER-249; ASP-263; CYS-277; PRO-341; PRO-401; TRP-410; CYS-427; TRP-436; MET-529; MET-565 AND LYS-590</scope>
    <scope>VARIANTS LEU-48 AND MET-153</scope>
</reference>
<reference key="18">
    <citation type="journal article" date="2008" name="Hum. Mutat.">
        <title>Mutations in CNGA3 impair trafficking or function of cone cyclic nucleotide-gated channels, resulting in achromatopsia.</title>
        <authorList>
            <consortium name="Achromatopsia clinical study group"/>
            <person name="Reuter P."/>
            <person name="Koeppen K."/>
            <person name="Ladewig T."/>
            <person name="Kohl S."/>
            <person name="Baumann B."/>
            <person name="Wissinger B."/>
        </authorList>
    </citation>
    <scope>VARIANTS ACHM2 LYS-228; CYS-277; GLN-283; TRP-439; THR-469; LEU-547 AND ARG-557</scope>
    <scope>CHARACTERIZATION OF VARIANTS ACHM2 LYS-228; GLN-283; ARG-291; TRP-439; THR-469; LEU-547; ARG-557 AND LYS-590</scope>
</reference>
<reference key="19">
    <citation type="journal article" date="2011" name="Hum. Mutat.">
        <title>Whole-exome sequencing identifies ALMS1, IQCB1, CNGA3, and MYO7A mutations in patients with Leber congenital amaurosis.</title>
        <authorList>
            <person name="Wang X."/>
            <person name="Wang H."/>
            <person name="Cao M."/>
            <person name="Li Z."/>
            <person name="Chen X."/>
            <person name="Patenia C."/>
            <person name="Gore A."/>
            <person name="Abboud E.B."/>
            <person name="Al-Rajhi A.A."/>
            <person name="Lewis A.R."/>
            <person name="Lupski J.R."/>
            <person name="Mardon G."/>
            <person name="Zhang K."/>
            <person name="Muzny D."/>
            <person name="Gibbs R.A."/>
            <person name="Chen R."/>
        </authorList>
    </citation>
    <scope>VARIANT MET-527</scope>
</reference>
<reference key="20">
    <citation type="journal article" date="2012" name="N. Engl. J. Med.">
        <title>Diagnostic exome sequencing in persons with severe intellectual disability.</title>
        <authorList>
            <person name="de Ligt J."/>
            <person name="Willemsen M.H."/>
            <person name="van Bon B.W."/>
            <person name="Kleefstra T."/>
            <person name="Yntema H.G."/>
            <person name="Kroes T."/>
            <person name="Vulto-van Silfhout A.T."/>
            <person name="Koolen D.A."/>
            <person name="de Vries P."/>
            <person name="Gilissen C."/>
            <person name="del Rosario M."/>
            <person name="Hoischen A."/>
            <person name="Scheffer H."/>
            <person name="de Vries B.B."/>
            <person name="Brunner H.G."/>
            <person name="Veltman J.A."/>
            <person name="Vissers L.E."/>
        </authorList>
    </citation>
    <scope>VARIANT CYS-335</scope>
</reference>
<reference key="21">
    <citation type="journal article" date="2014" name="JAMA Ophthalmol.">
        <title>Identification of CNGA3 mutations in 46 Families: common cause of achromatopsia and cone-rod dystrophies in Chinese patients.</title>
        <authorList>
            <person name="Li S."/>
            <person name="Huang L."/>
            <person name="Xiao X."/>
            <person name="Jia X."/>
            <person name="Guo X."/>
            <person name="Zhang Q."/>
        </authorList>
    </citation>
    <scope>VARIANTS ASP-120; LYS-198; ILE-224; MET-247; ARG-258; SER-330; PHE-334; HIS-533; ASN-570 AND HIS-646</scope>
    <scope>VARIANTS ACHM2 CYS-171; TRP-223; GLN-223; ASN-260; LYS-274; HIS-277; CYS-277; PRO-278; TRP-283; SER-322; TRP-436; GLN-436; TRP-439; MET-529; 543-ASP--SER-545 DEL AND LYS-590</scope>
</reference>
<reference key="22">
    <citation type="journal article" date="2015" name="J. Transl. Med.">
        <title>Identification of novel mutations by targeted exome sequencing and the genotype-phenotype assessment of patients with achromatopsia.</title>
        <authorList>
            <person name="Li F.F."/>
            <person name="Huang X.F."/>
            <person name="Chen J."/>
            <person name="Yu X.D."/>
            <person name="Zheng M.Q."/>
            <person name="Lu F."/>
            <person name="Jin Z.B."/>
            <person name="Gan D.K."/>
        </authorList>
    </citation>
    <scope>VARIANTS ACHM2 ASP-323 AND HIS-569</scope>
</reference>
<reference key="23">
    <citation type="journal article" date="2022" name="Commun. Biol.">
        <title>Structural and functional characterization of an achromatopsia-associated mutation in a phototransduction channel.</title>
        <authorList>
            <person name="Zheng X."/>
            <person name="Li H."/>
            <person name="Hu Z."/>
            <person name="Su D."/>
            <person name="Yang J."/>
        </authorList>
    </citation>
    <scope>CHARACTERIZATION OF VARIANT TRP-410</scope>
    <scope>SUBCELLULAR LOCATION</scope>
</reference>
<gene>
    <name evidence="26 29" type="primary">CNGA3</name>
    <name type="synonym">CNCG3</name>
</gene>
<protein>
    <recommendedName>
        <fullName>Cyclic nucleotide-gated channel alpha-3</fullName>
        <shortName>CNG channel alpha-3</shortName>
        <shortName>CNG-3</shortName>
        <shortName evidence="22">CNG3</shortName>
    </recommendedName>
    <alternativeName>
        <fullName evidence="23">Cone photoreceptor cGMP-gated channel subunit alpha-3</fullName>
    </alternativeName>
</protein>
<keyword id="KW-0002">3D-structure</keyword>
<keyword id="KW-0025">Alternative splicing</keyword>
<keyword id="KW-0106">Calcium</keyword>
<keyword id="KW-0107">Calcium channel</keyword>
<keyword id="KW-0109">Calcium transport</keyword>
<keyword id="KW-1003">Cell membrane</keyword>
<keyword id="KW-0140">cGMP</keyword>
<keyword id="KW-0142">cGMP-binding</keyword>
<keyword id="KW-0175">Coiled coil</keyword>
<keyword id="KW-0225">Disease variant</keyword>
<keyword id="KW-0325">Glycoprotein</keyword>
<keyword id="KW-0407">Ion channel</keyword>
<keyword id="KW-0406">Ion transport</keyword>
<keyword id="KW-0901">Leber congenital amaurosis</keyword>
<keyword id="KW-1071">Ligand-gated ion channel</keyword>
<keyword id="KW-0472">Membrane</keyword>
<keyword id="KW-0547">Nucleotide-binding</keyword>
<keyword id="KW-1267">Proteomics identification</keyword>
<keyword id="KW-1185">Reference proteome</keyword>
<keyword id="KW-0716">Sensory transduction</keyword>
<keyword id="KW-0915">Sodium</keyword>
<keyword id="KW-0894">Sodium channel</keyword>
<keyword id="KW-0739">Sodium transport</keyword>
<keyword id="KW-0812">Transmembrane</keyword>
<keyword id="KW-1133">Transmembrane helix</keyword>
<keyword id="KW-0813">Transport</keyword>
<keyword id="KW-0844">Vision</keyword>
<feature type="chain" id="PRO_0000219317" description="Cyclic nucleotide-gated channel alpha-3">
    <location>
        <begin position="1"/>
        <end position="694"/>
    </location>
</feature>
<feature type="topological domain" description="Cytoplasmic" evidence="27">
    <location>
        <begin position="1"/>
        <end position="170"/>
    </location>
</feature>
<feature type="transmembrane region" description="Helical; Name=S1" evidence="18 30">
    <location>
        <begin position="171"/>
        <end position="192"/>
    </location>
</feature>
<feature type="topological domain" description="Extracellular" evidence="27">
    <location>
        <begin position="193"/>
        <end position="198"/>
    </location>
</feature>
<feature type="transmembrane region" description="Helical; Name=S2" evidence="18 30">
    <location>
        <begin position="199"/>
        <end position="219"/>
    </location>
</feature>
<feature type="topological domain" description="Cytoplasmic" evidence="27">
    <location>
        <begin position="220"/>
        <end position="246"/>
    </location>
</feature>
<feature type="transmembrane region" description="Helical; Name=S3" evidence="18 30">
    <location>
        <begin position="247"/>
        <end position="266"/>
    </location>
</feature>
<feature type="topological domain" description="Extracellular" evidence="27">
    <location>
        <begin position="267"/>
        <end position="270"/>
    </location>
</feature>
<feature type="transmembrane region" description="Helical; Name=S4" evidence="18 30">
    <location>
        <begin position="271"/>
        <end position="288"/>
    </location>
</feature>
<feature type="topological domain" description="Cytoplasmic" evidence="27">
    <location>
        <begin position="289"/>
        <end position="298"/>
    </location>
</feature>
<feature type="transmembrane region" description="Helical; Name=S5" evidence="18 30">
    <location>
        <begin position="299"/>
        <end position="321"/>
    </location>
</feature>
<feature type="topological domain" description="Extracellular" evidence="27">
    <location>
        <begin position="322"/>
        <end position="347"/>
    </location>
</feature>
<feature type="transmembrane region" description="Helical; Name=P-helix" evidence="18 30">
    <location>
        <begin position="348"/>
        <end position="378"/>
    </location>
</feature>
<feature type="transmembrane region" description="Helical; Name=S6" evidence="18 30">
    <location>
        <begin position="379"/>
        <end position="403"/>
    </location>
</feature>
<feature type="topological domain" description="Cytoplasmic" evidence="27">
    <location>
        <begin position="404"/>
        <end position="694"/>
    </location>
</feature>
<feature type="region of interest" description="Disordered" evidence="4">
    <location>
        <begin position="1"/>
        <end position="24"/>
    </location>
</feature>
<feature type="region of interest" description="Disordered" evidence="4">
    <location>
        <begin position="109"/>
        <end position="152"/>
    </location>
</feature>
<feature type="region of interest" description="Ion conduction pathway" evidence="28">
    <location>
        <begin position="298"/>
        <end position="406"/>
    </location>
</feature>
<feature type="region of interest" description="Selectivity filter" evidence="28">
    <location>
        <begin position="365"/>
        <end position="368"/>
    </location>
</feature>
<feature type="region of interest" description="C-linker" evidence="28">
    <location>
        <begin position="408"/>
        <end position="485"/>
    </location>
</feature>
<feature type="region of interest" description="Cyclic nucleotide-binding domain" evidence="20 31">
    <location>
        <begin position="488"/>
        <end position="608"/>
    </location>
</feature>
<feature type="region of interest" description="Disordered" evidence="4">
    <location>
        <begin position="662"/>
        <end position="694"/>
    </location>
</feature>
<feature type="coiled-coil region" evidence="13">
    <location>
        <begin position="626"/>
        <end position="669"/>
    </location>
</feature>
<feature type="compositionally biased region" description="Polar residues" evidence="4">
    <location>
        <begin position="1"/>
        <end position="11"/>
    </location>
</feature>
<feature type="compositionally biased region" description="Polar residues" evidence="4">
    <location>
        <begin position="112"/>
        <end position="123"/>
    </location>
</feature>
<feature type="binding site" evidence="20 31">
    <location>
        <position position="548"/>
    </location>
    <ligand>
        <name>3',5'-cyclic GMP</name>
        <dbReference type="ChEBI" id="CHEBI:57746"/>
    </ligand>
</feature>
<feature type="binding site" evidence="20 31">
    <location>
        <position position="549"/>
    </location>
    <ligand>
        <name>3',5'-cyclic GMP</name>
        <dbReference type="ChEBI" id="CHEBI:57746"/>
    </ligand>
</feature>
<feature type="binding site" evidence="20 31">
    <location>
        <position position="551"/>
    </location>
    <ligand>
        <name>3',5'-cyclic GMP</name>
        <dbReference type="ChEBI" id="CHEBI:57746"/>
    </ligand>
</feature>
<feature type="binding site" evidence="20 31">
    <location>
        <position position="564"/>
    </location>
    <ligand>
        <name>3',5'-cyclic GMP</name>
        <dbReference type="ChEBI" id="CHEBI:57746"/>
    </ligand>
</feature>
<feature type="binding site" evidence="20 31">
    <location>
        <position position="565"/>
    </location>
    <ligand>
        <name>3',5'-cyclic GMP</name>
        <dbReference type="ChEBI" id="CHEBI:57746"/>
    </ligand>
</feature>
<feature type="binding site" evidence="20 31">
    <location>
        <position position="609"/>
    </location>
    <ligand>
        <name>3',5'-cyclic GMP</name>
        <dbReference type="ChEBI" id="CHEBI:57746"/>
    </ligand>
</feature>
<feature type="site" description="Central gate" evidence="28">
    <location>
        <position position="392"/>
    </location>
</feature>
<feature type="site" description="Central gate" evidence="28">
    <location>
        <position position="396"/>
    </location>
</feature>
<feature type="glycosylation site" description="N-linked (GalNAc...) asparagine" evidence="18">
    <location>
        <position position="339"/>
    </location>
</feature>
<feature type="splice variant" id="VSP_057075" description="In isoform 3." evidence="24">
    <original>MAKINTQYSHPSRTHLKVKTSDRDLNRAENGLSRAHSSSEETSSVLQPGIAMETRGLADSGQGSFTGQGIA</original>
    <variation>METRGLADSGQGSFTGQGIARFGRIQKKSQPEKVVRAASRGRPLIGWTQWCAEDGGDESEMALAGSPGCSSGPQG</variation>
    <location>
        <begin position="1"/>
        <end position="71"/>
    </location>
</feature>
<feature type="splice variant" id="VSP_042525" description="In isoform 2." evidence="25">
    <original>SAWPLAKCNTNTSNNTEEE</original>
    <variation>R</variation>
    <location>
        <begin position="132"/>
        <end position="150"/>
    </location>
</feature>
<feature type="sequence variant" id="VAR_047565" description="In dbSNP:rs62156348." evidence="10">
    <original>P</original>
    <variation>L</variation>
    <location>
        <position position="48"/>
    </location>
</feature>
<feature type="sequence variant" id="VAR_071435" description="In dbSNP:rs199859850." evidence="16">
    <original>N</original>
    <variation>D</variation>
    <location>
        <position position="120"/>
    </location>
</feature>
<feature type="sequence variant" id="VAR_010902" description="In dbSNP:rs34314205." evidence="10 21">
    <original>T</original>
    <variation>M</variation>
    <location>
        <position position="153"/>
    </location>
</feature>
<feature type="sequence variant" id="VAR_047566" description="In ACHM2; dbSNP:rs747447519." evidence="6">
    <original>D</original>
    <variation>V</variation>
    <location>
        <position position="162"/>
    </location>
</feature>
<feature type="sequence variant" id="VAR_010903" description="In ACHM2; dbSNP:rs104893612." evidence="6 21">
    <original>P</original>
    <variation>L</variation>
    <location>
        <position position="163"/>
    </location>
</feature>
<feature type="sequence variant" id="VAR_071436" description="In ACHM2; also found in patients with cone-rod dystrophy; dbSNP:rs762773298." evidence="16">
    <original>W</original>
    <variation>C</variation>
    <location>
        <position position="171"/>
    </location>
</feature>
<feature type="sequence variant" id="VAR_047567" description="In ACHM2; dbSNP:rs1692740329." evidence="6">
    <original>Y</original>
    <variation>C</variation>
    <location>
        <position position="181"/>
    </location>
</feature>
<feature type="sequence variant" id="VAR_047568" description="In ACHM2." evidence="6">
    <original>N</original>
    <variation>Y</variation>
    <location>
        <position position="182"/>
    </location>
</feature>
<feature type="sequence variant" id="VAR_047569" description="In ACHM2." evidence="6">
    <original>L</original>
    <variation>F</variation>
    <location>
        <position position="186"/>
    </location>
</feature>
<feature type="sequence variant" id="VAR_047570" description="In ACHM2; dbSNP:rs761554853." evidence="6">
    <original>C</original>
    <variation>Y</variation>
    <location>
        <position position="191"/>
    </location>
</feature>
<feature type="sequence variant" id="VAR_047571" description="In ACHM2; dbSNP:rs2104235566." evidence="6">
    <original>E</original>
    <variation>K</variation>
    <location>
        <position position="194"/>
    </location>
</feature>
<feature type="sequence variant" id="VAR_021963" description="In dbSNP:rs2271041." evidence="16">
    <original>E</original>
    <variation>K</variation>
    <location>
        <position position="198"/>
    </location>
</feature>
<feature type="sequence variant" id="VAR_071438" description="In ACHM2; dbSNP:rs762668060." evidence="16">
    <original>R</original>
    <variation>Q</variation>
    <location>
        <position position="223"/>
    </location>
</feature>
<feature type="sequence variant" id="VAR_047572" description="In ACHM2; also found in patients with cone-rod dystrophy; dbSNP:rs138958917." evidence="6 8 10 16">
    <original>R</original>
    <variation>W</variation>
    <location>
        <position position="223"/>
    </location>
</feature>
<feature type="sequence variant" id="VAR_071439" description="Found in patients with cone-rod dystrophy; likely pathogenic." evidence="16">
    <original>T</original>
    <variation>I</variation>
    <location>
        <position position="224"/>
    </location>
</feature>
<feature type="sequence variant" id="VAR_047573" description="In ACHM2." evidence="6">
    <original>T</original>
    <variation>R</variation>
    <location>
        <position position="224"/>
    </location>
</feature>
<feature type="sequence variant" id="VAR_047574" description="In ACHM2; uncertain significance; the dose-response relationship for cGMP-activation is not significantly different from that of wild-type CNGA3; the dose-response relationship of the mutant CNGA3 + CNGB3 is similar to that of the wild-type protein; the channel density into the cell membrane is considerably improved by decreasing the cultivation temperature; dbSNP:rs147415641." evidence="12">
    <original>E</original>
    <variation>K</variation>
    <location>
        <position position="228"/>
    </location>
</feature>
<feature type="sequence variant" id="VAR_071440" description="In dbSNP:rs148616345." evidence="16">
    <original>T</original>
    <variation>M</variation>
    <location>
        <position position="247"/>
    </location>
</feature>
<feature type="sequence variant" id="VAR_047575" description="In ACHM2." evidence="10">
    <original>F</original>
    <variation>S</variation>
    <location>
        <position position="249"/>
    </location>
</feature>
<feature type="sequence variant" id="VAR_071441" description="Found in patients with cone-rod dystrophy; likely pathogenic." evidence="16">
    <original>P</original>
    <variation>R</variation>
    <location>
        <position position="258"/>
    </location>
</feature>
<feature type="sequence variant" id="VAR_047576" description="In ACHM2; also found in patients with cone-rod dystrophy; dbSNP:rs374258471." evidence="6 16">
    <original>D</original>
    <variation>N</variation>
    <location>
        <position position="260"/>
    </location>
</feature>
<feature type="sequence variant" id="VAR_047577" description="In ACHM2; dbSNP:rs943314733." evidence="10">
    <original>Y</original>
    <variation>D</variation>
    <location>
        <position position="263"/>
    </location>
</feature>
<feature type="sequence variant" id="VAR_047578" description="In ACHM2; dbSNP:rs781673067." evidence="6">
    <original>G</original>
    <variation>D</variation>
    <location>
        <position position="267"/>
    </location>
</feature>
<feature type="sequence variant" id="VAR_071442" description="In ACHM2." evidence="16">
    <original>R</original>
    <variation>K</variation>
    <location>
        <position position="274"/>
    </location>
</feature>
<feature type="sequence variant" id="VAR_047579" description="In ACHM2; also found in patients with cone-rod dystrophy; does not form functional homomeric or heteromeric channels; dbSNP:rs104893620." evidence="6 10 11 12 16">
    <original>R</original>
    <variation>C</variation>
    <location>
        <position position="277"/>
    </location>
</feature>
<feature type="sequence variant" id="VAR_047580" description="In ACHM2; also found in patients with cone-rod dystrophy; dbSNP:rs778114016." evidence="6 16">
    <original>R</original>
    <variation>H</variation>
    <location>
        <position position="277"/>
    </location>
</feature>
<feature type="sequence variant" id="VAR_071443" description="In ACHM2; dbSNP:rs763421555." evidence="16">
    <original>L</original>
    <variation>P</variation>
    <location>
        <position position="278"/>
    </location>
</feature>
<feature type="sequence variant" id="VAR_010904" description="In ACHM2; does not reveal any detectable calcium influx upon agonist application at 37 degrees Celsius; the channel function could be restored by incubating the transfected cells at 27 degrees Celsius; the dose-response relationship for cGMP-activation is not significantly different from that of wild-type CNGA3; the dose-response relationship of the mutant CNGA3 + CNGB3 is similar to that of the wild-type protein; a substantial reduction of macroscopic cGMP maximum current to only one-third of the mean value for wild-type CNGA3 + CNGB3 is observed for the mutant CNGA3 + CNGB3; the channel density into the cell membrane is considerably improved by decreasing the cultivation temperature; dbSNP:rs104893614." evidence="6 12 21">
    <original>R</original>
    <variation>Q</variation>
    <location>
        <position position="283"/>
    </location>
</feature>
<feature type="sequence variant" id="VAR_010905" description="In ACHM2; also found in patients with cone-rod dystrophy; dbSNP:rs104893613." evidence="6 16 21">
    <original>R</original>
    <variation>W</variation>
    <location>
        <position position="283"/>
    </location>
</feature>
<feature type="sequence variant" id="VAR_010906" description="In ACHM2; does not reveal any detectable calcium influx upon agonist application at 37 degrees Celsius; the channel function could be restored by incubating the transfected cells at 27 degrees Celsius; the K(1/2) value is shifted toward a higher cGMP concentration by a factor of 1.8; no positive influence of the CNGB3 subunit in the cGMP sensitivity is observed; a substantial reduction of macroscopic cGMP maximum current to only one-third of the mean value for wild-type CNGA3 + CNGB3 is observed for the mutant CNGA3 + CNGB3; the channel density into the cell membrane is considerably improved by decreasing the cultivation temperature; dbSNP:rs104893616." evidence="6 12 21">
    <original>T</original>
    <variation>R</variation>
    <location>
        <position position="291"/>
    </location>
</feature>
<feature type="sequence variant" id="VAR_047581" description="In ACHM2." evidence="6">
    <location>
        <position position="312"/>
    </location>
</feature>
<feature type="sequence variant" id="VAR_071444" description="In ACHM2." evidence="16">
    <original>F</original>
    <variation>S</variation>
    <location>
        <position position="322"/>
    </location>
</feature>
<feature type="sequence variant" id="VAR_075493" description="In ACHM2." evidence="17">
    <original>A</original>
    <variation>D</variation>
    <location>
        <position position="323"/>
    </location>
</feature>
<feature type="sequence variant" id="VAR_071445" description="Found in patients with cone-rod dystrophy; likely pathogenic." evidence="16">
    <original>F</original>
    <variation>S</variation>
    <location>
        <position position="330"/>
    </location>
</feature>
<feature type="sequence variant" id="VAR_071446" description="Found in patients with cone-rod dystrophy; likely pathogenic; dbSNP:rs1692907593." evidence="16">
    <original>S</original>
    <variation>F</variation>
    <location>
        <position position="334"/>
    </location>
</feature>
<feature type="sequence variant" id="VAR_069398" evidence="15">
    <original>W</original>
    <variation>C</variation>
    <location>
        <position position="335"/>
    </location>
</feature>
<feature type="sequence variant" id="VAR_047582" description="In ACHM2; dbSNP:rs1227761587." evidence="6 10">
    <original>S</original>
    <variation>P</variation>
    <location>
        <position position="341"/>
    </location>
</feature>
<feature type="sequence variant" id="VAR_047583" description="In ACHM2; dbSNP:rs766637612." evidence="6">
    <original>T</original>
    <variation>S</variation>
    <location>
        <position position="369"/>
    </location>
</feature>
<feature type="sequence variant" id="VAR_047584" description="In ACHM2; dbSNP:rs1464167194." evidence="6">
    <original>P</original>
    <variation>S</variation>
    <location>
        <position position="372"/>
    </location>
</feature>
<feature type="sequence variant" id="VAR_047585" description="In ACHM2; dbSNP:rs1692911763." evidence="6">
    <original>F</original>
    <variation>S</variation>
    <location>
        <position position="380"/>
    </location>
</feature>
<feature type="sequence variant" id="VAR_047586" description="In ACHM2; dbSNP:rs916035276." evidence="10">
    <original>S</original>
    <variation>P</variation>
    <location>
        <position position="401"/>
    </location>
</feature>
<feature type="sequence variant" id="VAR_047587" description="In ACHM2; dbSNP:rs1553450734." evidence="6">
    <original>M</original>
    <variation>T</variation>
    <location>
        <position position="406"/>
    </location>
</feature>
<feature type="sequence variant" id="VAR_010910" description="In ACHM2; cytotoxic; mutant CNGA3 channels are spontaneously open in the absence of cGMP; dbSNP:rs137852608." evidence="6 10 19 21">
    <original>R</original>
    <variation>W</variation>
    <location>
        <position position="410"/>
    </location>
</feature>
<feature type="sequence variant" id="VAR_047588" description="In ACHM2; dbSNP:rs141386891." evidence="6 10">
    <original>R</original>
    <variation>C</variation>
    <location>
        <position position="427"/>
    </location>
</feature>
<feature type="sequence variant" id="VAR_071447" description="In ACHM2; dbSNP:rs767083685." evidence="16">
    <original>R</original>
    <variation>Q</variation>
    <location>
        <position position="436"/>
    </location>
</feature>
<feature type="sequence variant" id="VAR_047589" description="In ACHM2; also found in patients with cone-rod dystrophy; dbSNP:rs104893621." evidence="6 8 10 16">
    <original>R</original>
    <variation>W</variation>
    <location>
        <position position="436"/>
    </location>
</feature>
<feature type="sequence variant" id="VAR_047590" description="In ACHM2; also found in patients with cone-rod dystrophy; does not reveal any detectable calcium influx upon agonist application at 37 degrees Celsius; dbSNP:rs749842881." evidence="12 16">
    <original>R</original>
    <variation>W</variation>
    <location>
        <position position="439"/>
    </location>
</feature>
<feature type="sequence variant" id="VAR_047591" description="In ACHM2; the dose-response relationship for cGMP-activation is shifted toward a lower cGMP concentration; the left shift in the dose-response relationship of the mutant CNGA3 is less distinctive than in homomeric channels with this mutation indicating a partial rescue effect of the CNGB3 subunit; is in large part located in the cell membrane at 37 and 27 degrees Celsius; dbSNP:rs117522010." evidence="12">
    <original>A</original>
    <variation>T</variation>
    <location>
        <position position="469"/>
    </location>
</feature>
<feature type="sequence variant" id="VAR_047592" description="In ACHM2; mutant CNGA3 alone or together with the CNGB3 subunit exhibit an increase in apparent affinity for cGMP and an increase in the relative agonist efficacy of cAMP compared with cGMP; cell surface expression levels is unchanged; dbSNP:rs373954146." evidence="6 11">
    <original>N</original>
    <variation>S</variation>
    <location>
        <position position="471"/>
    </location>
</feature>
<feature type="sequence variant" id="VAR_047593" description="In ACHM2." evidence="6">
    <original>D</original>
    <variation>V</variation>
    <location>
        <position position="485"/>
    </location>
</feature>
<feature type="sequence variant" id="VAR_047594" description="In ACHM2; dbSNP:rs908111816." evidence="6">
    <original>C</original>
    <variation>S</variation>
    <location>
        <position position="510"/>
    </location>
</feature>
<feature type="sequence variant" id="VAR_047595" description="In ACHM2." evidence="6">
    <original>G</original>
    <variation>E</variation>
    <location>
        <position position="513"/>
    </location>
</feature>
<feature type="sequence variant" id="VAR_047596" description="In ACHM2." evidence="6">
    <original>G</original>
    <variation>E</variation>
    <location>
        <position position="516"/>
    </location>
</feature>
<feature type="sequence variant" id="VAR_047597" description="In ACHM2; dbSNP:rs2104249119." evidence="6">
    <original>I</original>
    <variation>T</variation>
    <location>
        <position position="522"/>
    </location>
</feature>
<feature type="sequence variant" id="VAR_047598" description="In ACHM2." evidence="6">
    <original>G</original>
    <variation>D</variation>
    <location>
        <position position="525"/>
    </location>
</feature>
<feature type="sequence variant" id="VAR_066860" description="Found in a patient with Leber congenital amaurosis; uncertain significance; dbSNP:rs375928335." evidence="14">
    <original>L</original>
    <variation>M</variation>
    <location>
        <position position="527"/>
    </location>
</feature>
<feature type="sequence variant" id="VAR_010907" description="In ACHM2; also found in patients with cone-rod dystrophy; dbSNP:rs104893619." evidence="6 10 16 21">
    <original>V</original>
    <variation>M</variation>
    <location>
        <position position="529"/>
    </location>
</feature>
<feature type="sequence variant" id="VAR_071448" description="Found in patients with cone-rod dystrophy; likely pathogenic; dbSNP:rs775332304." evidence="16">
    <original>D</original>
    <variation>H</variation>
    <location>
        <position position="533"/>
    </location>
</feature>
<feature type="sequence variant" id="VAR_071449" description="In ACHM2." evidence="16">
    <location>
        <begin position="543"/>
        <end position="545"/>
    </location>
</feature>
<feature type="sequence variant" id="VAR_010908" description="In ACHM2; does not reveal any detectable calcium influx upon agonist application at 37 degrees Celsius; the channel function could be restored by incubating the transfected cells at 27 degrees Celsius; the dose-response relationship for cGMP-activation is shifted toward a lower cGMP concentration; a substantial reduction of macroscopic cGMP maximum current to only one-third of the mean value for wild-type CNGA3 + CNGB3 is observed for the mutant CNGA3 + CNGB3; is in large part located in the cell membrane at 37 and 27 degrees Celsius; dbSNP:rs104893617." evidence="6 8 12 21">
    <original>F</original>
    <variation>L</variation>
    <location>
        <position position="547"/>
    </location>
</feature>
<feature type="sequence variant" id="VAR_047599" description="In ACHM2; dbSNP:rs781227859." evidence="8">
    <original>G</original>
    <variation>R</variation>
    <location>
        <position position="548"/>
    </location>
</feature>
<feature type="sequence variant" id="VAR_010909" description="In ACHM2; the K(1/2) value is shifted toward a higher cGMP concentration by a factor of 3.0; no positive influence of the CNGB3 subunit in the cGMP sensitivity is observed; average cGMP maximum current is decreased to half of the mean wild-type value for the mutant CNGA3 + CNGB3; dbSNP:rs104893615." evidence="6 12 21">
    <original>G</original>
    <variation>R</variation>
    <location>
        <position position="557"/>
    </location>
</feature>
<feature type="sequence variant" id="VAR_047600" description="In ACHM2; mutant CNGA3 alone or together with the CNGB3 subunit exhibit an increase in apparent affinity for cGMP and an increase in the relative agonist efficacy of cAMP compared with cGMP; cell surface expression levels is significantly reduced; dbSNP:rs552069173." evidence="6 11">
    <original>R</original>
    <variation>H</variation>
    <location>
        <position position="563"/>
    </location>
</feature>
<feature type="sequence variant" id="VAR_047601" description="In ACHM2; dbSNP:rs201747279." evidence="6 10">
    <original>T</original>
    <variation>M</variation>
    <location>
        <position position="565"/>
    </location>
</feature>
<feature type="sequence variant" id="VAR_047602" description="In ACHM2; dbSNP:rs201782746." evidence="6 8 17">
    <original>R</original>
    <variation>H</variation>
    <location>
        <position position="569"/>
    </location>
</feature>
<feature type="sequence variant" id="VAR_071450" description="Found in patients with cone-rod dystrophy; likely pathogenic." evidence="16">
    <original>S</original>
    <variation>N</variation>
    <location>
        <position position="570"/>
    </location>
</feature>
<feature type="sequence variant" id="VAR_047603" description="In ACHM2." evidence="6">
    <original>Y</original>
    <variation>C</variation>
    <location>
        <position position="573"/>
    </location>
</feature>
<feature type="sequence variant" id="VAR_047604" description="In ACHM2; also found in patients with cone-rod dystrophy; the dose-response relationship for cGMP-activation is shifted toward a lower cGMP concentration; dbSNP:rs763041373." evidence="10 12 16">
    <original>E</original>
    <variation>K</variation>
    <location>
        <position position="590"/>
    </location>
</feature>
<feature type="sequence variant" id="VAR_047605" description="In ACHM2; dbSNP:rs774676415." evidence="6">
    <original>E</original>
    <variation>K</variation>
    <location>
        <position position="593"/>
    </location>
</feature>
<feature type="sequence variant" id="VAR_071451" description="In dbSNP:rs141577844." evidence="16">
    <original>R</original>
    <variation>H</variation>
    <location>
        <position position="646"/>
    </location>
</feature>
<feature type="helix" evidence="33">
    <location>
        <begin position="167"/>
        <end position="192"/>
    </location>
</feature>
<feature type="helix" evidence="33">
    <location>
        <begin position="195"/>
        <end position="198"/>
    </location>
</feature>
<feature type="helix" evidence="33">
    <location>
        <begin position="200"/>
        <end position="221"/>
    </location>
</feature>
<feature type="helix" evidence="33">
    <location>
        <begin position="236"/>
        <end position="244"/>
    </location>
</feature>
<feature type="helix" evidence="33">
    <location>
        <begin position="247"/>
        <end position="255"/>
    </location>
</feature>
<feature type="helix" evidence="33">
    <location>
        <begin position="259"/>
        <end position="262"/>
    </location>
</feature>
<feature type="helix" evidence="33">
    <location>
        <begin position="263"/>
        <end position="266"/>
    </location>
</feature>
<feature type="helix" evidence="33">
    <location>
        <begin position="271"/>
        <end position="279"/>
    </location>
</feature>
<feature type="helix" evidence="33">
    <location>
        <begin position="281"/>
        <end position="294"/>
    </location>
</feature>
<feature type="helix" evidence="33">
    <location>
        <begin position="298"/>
        <end position="328"/>
    </location>
</feature>
<feature type="strand" evidence="33">
    <location>
        <begin position="332"/>
        <end position="336"/>
    </location>
</feature>
<feature type="turn" evidence="33">
    <location>
        <begin position="343"/>
        <end position="346"/>
    </location>
</feature>
<feature type="helix" evidence="33">
    <location>
        <begin position="348"/>
        <end position="363"/>
    </location>
</feature>
<feature type="helix" evidence="33">
    <location>
        <begin position="375"/>
        <end position="406"/>
    </location>
</feature>
<feature type="helix" evidence="33">
    <location>
        <begin position="408"/>
        <end position="426"/>
    </location>
</feature>
<feature type="helix" evidence="33">
    <location>
        <begin position="431"/>
        <end position="446"/>
    </location>
</feature>
<feature type="helix" evidence="33">
    <location>
        <begin position="453"/>
        <end position="456"/>
    </location>
</feature>
<feature type="strand" evidence="33">
    <location>
        <begin position="458"/>
        <end position="460"/>
    </location>
</feature>
<feature type="helix" evidence="33">
    <location>
        <begin position="462"/>
        <end position="470"/>
    </location>
</feature>
<feature type="helix" evidence="33">
    <location>
        <begin position="474"/>
        <end position="477"/>
    </location>
</feature>
<feature type="strand" evidence="33">
    <location>
        <begin position="480"/>
        <end position="485"/>
    </location>
</feature>
<feature type="helix" evidence="33">
    <location>
        <begin position="488"/>
        <end position="496"/>
    </location>
</feature>
<feature type="strand" evidence="33">
    <location>
        <begin position="499"/>
        <end position="503"/>
    </location>
</feature>
<feature type="strand" evidence="33">
    <location>
        <begin position="508"/>
        <end position="510"/>
    </location>
</feature>
<feature type="strand" evidence="33">
    <location>
        <begin position="518"/>
        <end position="524"/>
    </location>
</feature>
<feature type="strand" evidence="33">
    <location>
        <begin position="527"/>
        <end position="530"/>
    </location>
</feature>
<feature type="strand" evidence="33">
    <location>
        <begin position="532"/>
        <end position="534"/>
    </location>
</feature>
<feature type="strand" evidence="33">
    <location>
        <begin position="538"/>
        <end position="541"/>
    </location>
</feature>
<feature type="strand" evidence="34">
    <location>
        <begin position="546"/>
        <end position="548"/>
    </location>
</feature>
<feature type="helix" evidence="33">
    <location>
        <begin position="549"/>
        <end position="553"/>
    </location>
</feature>
<feature type="strand" evidence="33">
    <location>
        <begin position="558"/>
        <end position="560"/>
    </location>
</feature>
<feature type="strand" evidence="33">
    <location>
        <begin position="566"/>
        <end position="572"/>
    </location>
</feature>
<feature type="strand" evidence="33">
    <location>
        <begin position="574"/>
        <end position="580"/>
    </location>
</feature>
<feature type="helix" evidence="33">
    <location>
        <begin position="581"/>
        <end position="587"/>
    </location>
</feature>
<feature type="strand" evidence="35">
    <location>
        <begin position="588"/>
        <end position="590"/>
    </location>
</feature>
<feature type="helix" evidence="33">
    <location>
        <begin position="592"/>
        <end position="609"/>
    </location>
</feature>
<feature type="helix" evidence="32">
    <location>
        <begin position="626"/>
        <end position="668"/>
    </location>
</feature>
<accession>Q16281</accession>
<accession>E9PF93</accession>
<accession>Q4VAP7</accession>
<accession>Q53RD2</accession>
<accession>Q6ZNA7</accession>
<accession>Q9UP64</accession>
<comment type="function">
    <text evidence="1 2 5 7 18 20">Pore-forming subunit of the cone cyclic nucleotide-gated channel. Mediates cone photoresponses at bright light converting transient changes in intracellular cGMP levels into electrical signals. In the dark, cGMP levels are high and keep the channel open enabling a steady inward current carried by Na(+) and Ca(2+) ions that leads to membrane depolarization and neurotransmitter release from synaptic terminals. Upon photon absorption cGMP levels decline leading to channel closure and membrane hyperpolarization that ultimately slows neurotransmitter release and signals the presence of light, the end point of the phototransduction cascade (PubMed:10888875, PubMed:12815043, PubMed:34969976, PubMed:37463923). Pore-forming subunit of the gustatory cyclic nucleotide-gated channel. In the taste buds, may sense oral extracellular pH and conduct ion currents that modulate the excitability of taste cells (By similarity). Conducts cGMP- and cAMP-gated ion currents, with permeability for monovalent and divalent cations (By similarity) (PubMed:12815043).</text>
</comment>
<comment type="catalytic activity">
    <reaction evidence="1">
        <text>Ca(2+)(in) = Ca(2+)(out)</text>
        <dbReference type="Rhea" id="RHEA:29671"/>
        <dbReference type="ChEBI" id="CHEBI:29108"/>
    </reaction>
</comment>
<comment type="catalytic activity">
    <reaction evidence="7">
        <text>Na(+)(in) = Na(+)(out)</text>
        <dbReference type="Rhea" id="RHEA:34963"/>
        <dbReference type="ChEBI" id="CHEBI:29101"/>
    </reaction>
</comment>
<comment type="catalytic activity">
    <reaction evidence="7">
        <text>K(+)(in) = K(+)(out)</text>
        <dbReference type="Rhea" id="RHEA:29463"/>
        <dbReference type="ChEBI" id="CHEBI:29103"/>
    </reaction>
</comment>
<comment type="catalytic activity">
    <reaction evidence="1">
        <text>NH4(+)(in) = NH4(+)(out)</text>
        <dbReference type="Rhea" id="RHEA:28747"/>
        <dbReference type="ChEBI" id="CHEBI:28938"/>
    </reaction>
</comment>
<comment type="catalytic activity">
    <reaction evidence="7">
        <text>Rb(+)(in) = Rb(+)(out)</text>
        <dbReference type="Rhea" id="RHEA:78547"/>
        <dbReference type="ChEBI" id="CHEBI:49847"/>
    </reaction>
</comment>
<comment type="catalytic activity">
    <reaction evidence="7">
        <text>Li(+)(in) = Li(+)(out)</text>
        <dbReference type="Rhea" id="RHEA:78551"/>
        <dbReference type="ChEBI" id="CHEBI:49713"/>
    </reaction>
</comment>
<comment type="catalytic activity">
    <reaction evidence="7">
        <text>Cs(+)(in) = Cs(+)(out)</text>
        <dbReference type="Rhea" id="RHEA:78555"/>
        <dbReference type="ChEBI" id="CHEBI:49547"/>
    </reaction>
</comment>
<comment type="activity regulation">
    <text evidence="18">Inhibited by L-cis-diltiazem.</text>
</comment>
<comment type="subunit">
    <text evidence="5 9 13 18 20">Forms heterotetrameric channels composed of CNGA3 and CNGB3 subunits with 3:1 stoichiometry.</text>
</comment>
<comment type="interaction">
    <interactant intactId="EBI-1642108">
        <id>Q16281</id>
    </interactant>
    <interactant intactId="EBI-1104552">
        <id>Q9NYP9</id>
        <label>MIS18A</label>
    </interactant>
    <organismsDiffer>false</organismsDiffer>
    <experiments>3</experiments>
</comment>
<comment type="subcellular location">
    <subcellularLocation>
        <location evidence="7 19">Cell membrane</location>
        <topology evidence="3">Multi-pass membrane protein</topology>
    </subcellularLocation>
</comment>
<comment type="alternative products">
    <event type="alternative splicing"/>
    <isoform>
        <id>Q16281-1</id>
        <name>1</name>
        <sequence type="displayed"/>
    </isoform>
    <isoform>
        <id>Q16281-2</id>
        <name>2</name>
        <sequence type="described" ref="VSP_042525"/>
    </isoform>
    <isoform>
        <id>Q16281-3</id>
        <name>3</name>
        <sequence type="described" ref="VSP_057075"/>
    </isoform>
</comment>
<comment type="tissue specificity">
    <text>Prominently expressed in retina.</text>
</comment>
<comment type="domain">
    <text evidence="13">The C-terminal coiled-coil domain mediates homotrimerization of CNGA subunits.</text>
</comment>
<comment type="domain">
    <text evidence="18">The cyclic nucleotide-binding domain (CNBD) comprises three helices and a beta-roll of eight beta-strands from CNGA3 and CNGB3 subunits. Upon cNMP binding transmits the conformational changes to the C-linker domain of the S6 helix to open the ion conduction pathway.</text>
</comment>
<comment type="domain">
    <text evidence="18 20">The ion conduction pathway consists of S5, S6 and pore helices from CNGA3 and CNGB3 subunits. It contains a central hydrophobic gate that opens upon cNMP binding.</text>
</comment>
<comment type="disease" evidence="6 8 10 11 12 16 17 21">
    <disease id="DI-00022">
        <name>Achromatopsia 2</name>
        <acronym>ACHM2</acronym>
        <description>An autosomal recessive, ocular stationary disorder due to the absence of functioning cone photoreceptors in the retina. It is characterized by total colorblindness, low visual acuity, photophobia and nystagmus.</description>
        <dbReference type="MIM" id="216900"/>
    </disease>
    <text>The disease is caused by variants affecting the gene represented in this entry.</text>
</comment>
<comment type="similarity">
    <text evidence="27">Belongs to the cyclic nucleotide-gated cation channel (TC 1.A.1.5) family. CNGA3 subfamily.</text>
</comment>
<evidence type="ECO:0000250" key="1">
    <source>
        <dbReference type="UniProtKB" id="Q29441"/>
    </source>
</evidence>
<evidence type="ECO:0000250" key="2">
    <source>
        <dbReference type="UniProtKB" id="Q9ER33"/>
    </source>
</evidence>
<evidence type="ECO:0000255" key="3"/>
<evidence type="ECO:0000256" key="4">
    <source>
        <dbReference type="SAM" id="MobiDB-lite"/>
    </source>
</evidence>
<evidence type="ECO:0000269" key="5">
    <source>
    </source>
</evidence>
<evidence type="ECO:0000269" key="6">
    <source>
    </source>
</evidence>
<evidence type="ECO:0000269" key="7">
    <source>
    </source>
</evidence>
<evidence type="ECO:0000269" key="8">
    <source>
    </source>
</evidence>
<evidence type="ECO:0000269" key="9">
    <source>
    </source>
</evidence>
<evidence type="ECO:0000269" key="10">
    <source>
    </source>
</evidence>
<evidence type="ECO:0000269" key="11">
    <source>
    </source>
</evidence>
<evidence type="ECO:0000269" key="12">
    <source>
    </source>
</evidence>
<evidence type="ECO:0000269" key="13">
    <source>
    </source>
</evidence>
<evidence type="ECO:0000269" key="14">
    <source>
    </source>
</evidence>
<evidence type="ECO:0000269" key="15">
    <source>
    </source>
</evidence>
<evidence type="ECO:0000269" key="16">
    <source>
    </source>
</evidence>
<evidence type="ECO:0000269" key="17">
    <source>
    </source>
</evidence>
<evidence type="ECO:0000269" key="18">
    <source>
    </source>
</evidence>
<evidence type="ECO:0000269" key="19">
    <source>
    </source>
</evidence>
<evidence type="ECO:0000269" key="20">
    <source>
    </source>
</evidence>
<evidence type="ECO:0000269" key="21">
    <source>
    </source>
</evidence>
<evidence type="ECO:0000303" key="22">
    <source>
    </source>
</evidence>
<evidence type="ECO:0000303" key="23">
    <source>
    </source>
</evidence>
<evidence type="ECO:0000303" key="24">
    <source>
    </source>
</evidence>
<evidence type="ECO:0000303" key="25">
    <source>
    </source>
</evidence>
<evidence type="ECO:0000303" key="26">
    <source>
    </source>
</evidence>
<evidence type="ECO:0000305" key="27"/>
<evidence type="ECO:0000305" key="28">
    <source>
    </source>
</evidence>
<evidence type="ECO:0000312" key="29">
    <source>
        <dbReference type="HGNC" id="HGNC:2150"/>
    </source>
</evidence>
<evidence type="ECO:0007744" key="30">
    <source>
        <dbReference type="PDB" id="7RHS"/>
    </source>
</evidence>
<evidence type="ECO:0007744" key="31">
    <source>
        <dbReference type="PDB" id="8EUC"/>
    </source>
</evidence>
<evidence type="ECO:0007829" key="32">
    <source>
        <dbReference type="PDB" id="3SWY"/>
    </source>
</evidence>
<evidence type="ECO:0007829" key="33">
    <source>
        <dbReference type="PDB" id="7RHS"/>
    </source>
</evidence>
<evidence type="ECO:0007829" key="34">
    <source>
        <dbReference type="PDB" id="8EVA"/>
    </source>
</evidence>
<evidence type="ECO:0007829" key="35">
    <source>
        <dbReference type="PDB" id="8EVC"/>
    </source>
</evidence>
<name>CNGA3_HUMAN</name>
<dbReference type="EMBL" id="AF065314">
    <property type="protein sequence ID" value="AAC17440.1"/>
    <property type="molecule type" value="mRNA"/>
</dbReference>
<dbReference type="EMBL" id="AK131300">
    <property type="protein sequence ID" value="BAD18468.1"/>
    <property type="molecule type" value="mRNA"/>
</dbReference>
<dbReference type="EMBL" id="AC092675">
    <property type="protein sequence ID" value="AAY24181.1"/>
    <property type="molecule type" value="Genomic_DNA"/>
</dbReference>
<dbReference type="EMBL" id="BC096298">
    <property type="protein sequence ID" value="AAH96298.1"/>
    <property type="molecule type" value="mRNA"/>
</dbReference>
<dbReference type="EMBL" id="BC096299">
    <property type="protein sequence ID" value="AAH96299.1"/>
    <property type="molecule type" value="mRNA"/>
</dbReference>
<dbReference type="EMBL" id="BC096300">
    <property type="protein sequence ID" value="AAH96300.1"/>
    <property type="molecule type" value="mRNA"/>
</dbReference>
<dbReference type="EMBL" id="S76069">
    <property type="protein sequence ID" value="AAD14208.1"/>
    <property type="molecule type" value="Genomic_DNA"/>
</dbReference>
<dbReference type="CCDS" id="CCDS2034.1">
    <molecule id="Q16281-1"/>
</dbReference>
<dbReference type="CCDS" id="CCDS42719.1">
    <molecule id="Q16281-2"/>
</dbReference>
<dbReference type="PIR" id="I78560">
    <property type="entry name" value="I78560"/>
</dbReference>
<dbReference type="PIR" id="S74179">
    <property type="entry name" value="S74179"/>
</dbReference>
<dbReference type="RefSeq" id="NP_001073347.1">
    <molecule id="Q16281-2"/>
    <property type="nucleotide sequence ID" value="NM_001079878.2"/>
</dbReference>
<dbReference type="RefSeq" id="NP_001289.1">
    <molecule id="Q16281-1"/>
    <property type="nucleotide sequence ID" value="NM_001298.3"/>
</dbReference>
<dbReference type="PDB" id="3SWY">
    <property type="method" value="X-ray"/>
    <property type="resolution" value="1.90 A"/>
    <property type="chains" value="A/B/C=626-669"/>
</dbReference>
<dbReference type="PDB" id="7RHS">
    <property type="method" value="EM"/>
    <property type="resolution" value="2.93 A"/>
    <property type="chains" value="A/B/C=1-694"/>
</dbReference>
<dbReference type="PDB" id="8ETP">
    <property type="method" value="EM"/>
    <property type="resolution" value="3.52 A"/>
    <property type="chains" value="A/B/C=1-694"/>
</dbReference>
<dbReference type="PDB" id="8EU3">
    <property type="method" value="EM"/>
    <property type="resolution" value="3.62 A"/>
    <property type="chains" value="A/B/C=1-694"/>
</dbReference>
<dbReference type="PDB" id="8EUC">
    <property type="method" value="EM"/>
    <property type="resolution" value="3.61 A"/>
    <property type="chains" value="A/B/C=1-694"/>
</dbReference>
<dbReference type="PDB" id="8EV8">
    <property type="method" value="EM"/>
    <property type="resolution" value="3.11 A"/>
    <property type="chains" value="A/B/C=151-694"/>
</dbReference>
<dbReference type="PDB" id="8EV9">
    <property type="method" value="EM"/>
    <property type="resolution" value="3.33 A"/>
    <property type="chains" value="A/B/C=151-694"/>
</dbReference>
<dbReference type="PDB" id="8EVA">
    <property type="method" value="EM"/>
    <property type="resolution" value="3.33 A"/>
    <property type="chains" value="A/B/C=151-694"/>
</dbReference>
<dbReference type="PDB" id="8EVB">
    <property type="method" value="EM"/>
    <property type="resolution" value="3.60 A"/>
    <property type="chains" value="A/B/C=151-694"/>
</dbReference>
<dbReference type="PDB" id="8EVC">
    <property type="method" value="EM"/>
    <property type="resolution" value="3.33 A"/>
    <property type="chains" value="A/B/C=151-694"/>
</dbReference>
<dbReference type="PDBsum" id="3SWY"/>
<dbReference type="PDBsum" id="7RHS"/>
<dbReference type="PDBsum" id="8ETP"/>
<dbReference type="PDBsum" id="8EU3"/>
<dbReference type="PDBsum" id="8EUC"/>
<dbReference type="PDBsum" id="8EV8"/>
<dbReference type="PDBsum" id="8EV9"/>
<dbReference type="PDBsum" id="8EVA"/>
<dbReference type="PDBsum" id="8EVB"/>
<dbReference type="PDBsum" id="8EVC"/>
<dbReference type="EMDB" id="EMD-24468"/>
<dbReference type="EMDB" id="EMD-28595"/>
<dbReference type="EMDB" id="EMD-28603"/>
<dbReference type="EMDB" id="EMD-28611"/>
<dbReference type="EMDB" id="EMD-28622"/>
<dbReference type="EMDB" id="EMD-28623"/>
<dbReference type="EMDB" id="EMD-28624"/>
<dbReference type="EMDB" id="EMD-28625"/>
<dbReference type="EMDB" id="EMD-28626"/>
<dbReference type="SMR" id="Q16281"/>
<dbReference type="BioGRID" id="107661">
    <property type="interactions" value="35"/>
</dbReference>
<dbReference type="CORUM" id="Q16281"/>
<dbReference type="FunCoup" id="Q16281">
    <property type="interactions" value="665"/>
</dbReference>
<dbReference type="IntAct" id="Q16281">
    <property type="interactions" value="30"/>
</dbReference>
<dbReference type="STRING" id="9606.ENSP00000272602"/>
<dbReference type="GuidetoPHARMACOLOGY" id="396"/>
<dbReference type="TCDB" id="1.A.1.5.12">
    <property type="family name" value="the voltage-gated ion channel (vic) superfamily"/>
</dbReference>
<dbReference type="GlyGen" id="Q16281">
    <property type="glycosylation" value="1 site"/>
</dbReference>
<dbReference type="iPTMnet" id="Q16281"/>
<dbReference type="PhosphoSitePlus" id="Q16281"/>
<dbReference type="BioMuta" id="CNGA3"/>
<dbReference type="DMDM" id="13959682"/>
<dbReference type="jPOST" id="Q16281"/>
<dbReference type="MassIVE" id="Q16281"/>
<dbReference type="PaxDb" id="9606-ENSP00000377140"/>
<dbReference type="PeptideAtlas" id="Q16281"/>
<dbReference type="ProteomicsDB" id="20054"/>
<dbReference type="ProteomicsDB" id="60848">
    <molecule id="Q16281-1"/>
</dbReference>
<dbReference type="ProteomicsDB" id="60849">
    <molecule id="Q16281-2"/>
</dbReference>
<dbReference type="Antibodypedia" id="47515">
    <property type="antibodies" value="121 antibodies from 22 providers"/>
</dbReference>
<dbReference type="DNASU" id="1261"/>
<dbReference type="Ensembl" id="ENST00000272602.7">
    <molecule id="Q16281-1"/>
    <property type="protein sequence ID" value="ENSP00000272602.2"/>
    <property type="gene ID" value="ENSG00000144191.12"/>
</dbReference>
<dbReference type="Ensembl" id="ENST00000436404.6">
    <molecule id="Q16281-2"/>
    <property type="protein sequence ID" value="ENSP00000410070.2"/>
    <property type="gene ID" value="ENSG00000144191.12"/>
</dbReference>
<dbReference type="GeneID" id="1261"/>
<dbReference type="KEGG" id="hsa:1261"/>
<dbReference type="MANE-Select" id="ENST00000272602.7">
    <property type="protein sequence ID" value="ENSP00000272602.2"/>
    <property type="RefSeq nucleotide sequence ID" value="NM_001298.3"/>
    <property type="RefSeq protein sequence ID" value="NP_001289.1"/>
</dbReference>
<dbReference type="UCSC" id="uc002syt.4">
    <molecule id="Q16281-1"/>
    <property type="organism name" value="human"/>
</dbReference>
<dbReference type="AGR" id="HGNC:2150"/>
<dbReference type="CTD" id="1261"/>
<dbReference type="DisGeNET" id="1261"/>
<dbReference type="GeneCards" id="CNGA3"/>
<dbReference type="GeneReviews" id="CNGA3"/>
<dbReference type="HGNC" id="HGNC:2150">
    <property type="gene designation" value="CNGA3"/>
</dbReference>
<dbReference type="HPA" id="ENSG00000144191">
    <property type="expression patterns" value="Tissue enhanced (choroid plexus, intestine, pituitary gland, retina)"/>
</dbReference>
<dbReference type="MalaCards" id="CNGA3"/>
<dbReference type="MIM" id="216900">
    <property type="type" value="phenotype"/>
</dbReference>
<dbReference type="MIM" id="600053">
    <property type="type" value="gene"/>
</dbReference>
<dbReference type="neXtProt" id="NX_Q16281"/>
<dbReference type="OpenTargets" id="ENSG00000144191"/>
<dbReference type="Orphanet" id="49382">
    <property type="disease" value="Achromatopsia"/>
</dbReference>
<dbReference type="Orphanet" id="1872">
    <property type="disease" value="Cone rod dystrophy"/>
</dbReference>
<dbReference type="PharmGKB" id="PA26660"/>
<dbReference type="VEuPathDB" id="HostDB:ENSG00000144191"/>
<dbReference type="eggNOG" id="KOG0500">
    <property type="taxonomic scope" value="Eukaryota"/>
</dbReference>
<dbReference type="GeneTree" id="ENSGT00940000158737"/>
<dbReference type="HOGENOM" id="CLU_005746_12_0_1"/>
<dbReference type="InParanoid" id="Q16281"/>
<dbReference type="OMA" id="DENSTHC"/>
<dbReference type="OrthoDB" id="421226at2759"/>
<dbReference type="PAN-GO" id="Q16281">
    <property type="GO annotations" value="7 GO annotations based on evolutionary models"/>
</dbReference>
<dbReference type="PhylomeDB" id="Q16281"/>
<dbReference type="TreeFam" id="TF319048"/>
<dbReference type="PathwayCommons" id="Q16281"/>
<dbReference type="SignaLink" id="Q16281"/>
<dbReference type="BioGRID-ORCS" id="1261">
    <property type="hits" value="16 hits in 1146 CRISPR screens"/>
</dbReference>
<dbReference type="EvolutionaryTrace" id="Q16281"/>
<dbReference type="GeneWiki" id="Cyclic_nucleotide-gated_channel_alpha_3"/>
<dbReference type="GenomeRNAi" id="1261"/>
<dbReference type="Pharos" id="Q16281">
    <property type="development level" value="Tchem"/>
</dbReference>
<dbReference type="PRO" id="PR:Q16281"/>
<dbReference type="Proteomes" id="UP000005640">
    <property type="component" value="Chromosome 2"/>
</dbReference>
<dbReference type="RNAct" id="Q16281">
    <property type="molecule type" value="protein"/>
</dbReference>
<dbReference type="Bgee" id="ENSG00000144191">
    <property type="expression patterns" value="Expressed in ventricular zone and 85 other cell types or tissues"/>
</dbReference>
<dbReference type="GO" id="GO:0043194">
    <property type="term" value="C:axon initial segment"/>
    <property type="evidence" value="ECO:0007669"/>
    <property type="project" value="Ensembl"/>
</dbReference>
<dbReference type="GO" id="GO:0030425">
    <property type="term" value="C:dendrite"/>
    <property type="evidence" value="ECO:0007669"/>
    <property type="project" value="Ensembl"/>
</dbReference>
<dbReference type="GO" id="GO:0097386">
    <property type="term" value="C:glial cell projection"/>
    <property type="evidence" value="ECO:0007669"/>
    <property type="project" value="Ensembl"/>
</dbReference>
<dbReference type="GO" id="GO:0017071">
    <property type="term" value="C:intracellular cyclic nucleotide activated cation channel complex"/>
    <property type="evidence" value="ECO:0000318"/>
    <property type="project" value="GO_Central"/>
</dbReference>
<dbReference type="GO" id="GO:0043204">
    <property type="term" value="C:perikaryon"/>
    <property type="evidence" value="ECO:0007669"/>
    <property type="project" value="Ensembl"/>
</dbReference>
<dbReference type="GO" id="GO:0005886">
    <property type="term" value="C:plasma membrane"/>
    <property type="evidence" value="ECO:0000314"/>
    <property type="project" value="UniProtKB"/>
</dbReference>
<dbReference type="GO" id="GO:1902495">
    <property type="term" value="C:transmembrane transporter complex"/>
    <property type="evidence" value="ECO:0000314"/>
    <property type="project" value="UniProtKB"/>
</dbReference>
<dbReference type="GO" id="GO:0045296">
    <property type="term" value="F:cadherin binding"/>
    <property type="evidence" value="ECO:0007669"/>
    <property type="project" value="Ensembl"/>
</dbReference>
<dbReference type="GO" id="GO:0005262">
    <property type="term" value="F:calcium channel activity"/>
    <property type="evidence" value="ECO:0007669"/>
    <property type="project" value="UniProtKB-KW"/>
</dbReference>
<dbReference type="GO" id="GO:0030553">
    <property type="term" value="F:cGMP binding"/>
    <property type="evidence" value="ECO:0000314"/>
    <property type="project" value="UniProtKB"/>
</dbReference>
<dbReference type="GO" id="GO:0005222">
    <property type="term" value="F:intracellularly cAMP-activated cation channel activity"/>
    <property type="evidence" value="ECO:0000314"/>
    <property type="project" value="UniProtKB"/>
</dbReference>
<dbReference type="GO" id="GO:0005223">
    <property type="term" value="F:intracellularly cGMP-activated cation channel activity"/>
    <property type="evidence" value="ECO:0000314"/>
    <property type="project" value="UniProtKB"/>
</dbReference>
<dbReference type="GO" id="GO:0015276">
    <property type="term" value="F:ligand-gated monoatomic ion channel activity"/>
    <property type="evidence" value="ECO:0000304"/>
    <property type="project" value="ProtInc"/>
</dbReference>
<dbReference type="GO" id="GO:0017022">
    <property type="term" value="F:myosin binding"/>
    <property type="evidence" value="ECO:0007669"/>
    <property type="project" value="Ensembl"/>
</dbReference>
<dbReference type="GO" id="GO:0044877">
    <property type="term" value="F:protein-containing complex binding"/>
    <property type="evidence" value="ECO:0000318"/>
    <property type="project" value="GO_Central"/>
</dbReference>
<dbReference type="GO" id="GO:0005272">
    <property type="term" value="F:sodium channel activity"/>
    <property type="evidence" value="ECO:0007669"/>
    <property type="project" value="UniProtKB-KW"/>
</dbReference>
<dbReference type="GO" id="GO:0098659">
    <property type="term" value="P:inorganic cation import across plasma membrane"/>
    <property type="evidence" value="ECO:0007669"/>
    <property type="project" value="Ensembl"/>
</dbReference>
<dbReference type="GO" id="GO:0098655">
    <property type="term" value="P:monoatomic cation transmembrane transport"/>
    <property type="evidence" value="ECO:0000318"/>
    <property type="project" value="GO_Central"/>
</dbReference>
<dbReference type="GO" id="GO:0006812">
    <property type="term" value="P:monoatomic cation transport"/>
    <property type="evidence" value="ECO:0000315"/>
    <property type="project" value="UniProtKB"/>
</dbReference>
<dbReference type="GO" id="GO:0051591">
    <property type="term" value="P:response to cAMP"/>
    <property type="evidence" value="ECO:0007669"/>
    <property type="project" value="Ensembl"/>
</dbReference>
<dbReference type="GO" id="GO:0032026">
    <property type="term" value="P:response to magnesium ion"/>
    <property type="evidence" value="ECO:0007669"/>
    <property type="project" value="Ensembl"/>
</dbReference>
<dbReference type="GO" id="GO:0007165">
    <property type="term" value="P:signal transduction"/>
    <property type="evidence" value="ECO:0000304"/>
    <property type="project" value="ProtInc"/>
</dbReference>
<dbReference type="GO" id="GO:0007601">
    <property type="term" value="P:visual perception"/>
    <property type="evidence" value="ECO:0000304"/>
    <property type="project" value="ProtInc"/>
</dbReference>
<dbReference type="CDD" id="cd00038">
    <property type="entry name" value="CAP_ED"/>
    <property type="match status" value="1"/>
</dbReference>
<dbReference type="FunFam" id="2.60.120.10:FF:000002">
    <property type="entry name" value="Cyclic nucleotide gated channel alpha 1a"/>
    <property type="match status" value="1"/>
</dbReference>
<dbReference type="FunFam" id="1.10.287.630:FF:000001">
    <property type="entry name" value="Cyclic nucleotide-gated channel alpha 3"/>
    <property type="match status" value="1"/>
</dbReference>
<dbReference type="FunFam" id="1.10.287.70:FF:000030">
    <property type="entry name" value="Cyclic nucleotide-gated channel alpha 3"/>
    <property type="match status" value="1"/>
</dbReference>
<dbReference type="FunFam" id="1.20.5.300:FF:000002">
    <property type="entry name" value="Cyclic nucleotide-gated channel alpha 3"/>
    <property type="match status" value="1"/>
</dbReference>
<dbReference type="Gene3D" id="1.10.287.70">
    <property type="match status" value="1"/>
</dbReference>
<dbReference type="Gene3D" id="1.20.5.300">
    <property type="match status" value="1"/>
</dbReference>
<dbReference type="Gene3D" id="1.10.287.630">
    <property type="entry name" value="Helix hairpin bin"/>
    <property type="match status" value="1"/>
</dbReference>
<dbReference type="Gene3D" id="2.60.120.10">
    <property type="entry name" value="Jelly Rolls"/>
    <property type="match status" value="1"/>
</dbReference>
<dbReference type="InterPro" id="IPR032406">
    <property type="entry name" value="CLZ_dom"/>
</dbReference>
<dbReference type="InterPro" id="IPR050866">
    <property type="entry name" value="CNG_cation_channel"/>
</dbReference>
<dbReference type="InterPro" id="IPR018488">
    <property type="entry name" value="cNMP-bd_CS"/>
</dbReference>
<dbReference type="InterPro" id="IPR000595">
    <property type="entry name" value="cNMP-bd_dom"/>
</dbReference>
<dbReference type="InterPro" id="IPR018490">
    <property type="entry name" value="cNMP-bd_dom_sf"/>
</dbReference>
<dbReference type="InterPro" id="IPR005821">
    <property type="entry name" value="Ion_trans_dom"/>
</dbReference>
<dbReference type="InterPro" id="IPR014710">
    <property type="entry name" value="RmlC-like_jellyroll"/>
</dbReference>
<dbReference type="PANTHER" id="PTHR45638:SF6">
    <property type="entry name" value="CYCLIC NUCLEOTIDE-GATED CATION CHANNEL ALPHA-3"/>
    <property type="match status" value="1"/>
</dbReference>
<dbReference type="PANTHER" id="PTHR45638">
    <property type="entry name" value="CYCLIC NUCLEOTIDE-GATED CATION CHANNEL SUBUNIT A"/>
    <property type="match status" value="1"/>
</dbReference>
<dbReference type="Pfam" id="PF16526">
    <property type="entry name" value="CLZ"/>
    <property type="match status" value="1"/>
</dbReference>
<dbReference type="Pfam" id="PF00027">
    <property type="entry name" value="cNMP_binding"/>
    <property type="match status" value="1"/>
</dbReference>
<dbReference type="Pfam" id="PF00520">
    <property type="entry name" value="Ion_trans"/>
    <property type="match status" value="1"/>
</dbReference>
<dbReference type="SMART" id="SM00100">
    <property type="entry name" value="cNMP"/>
    <property type="match status" value="1"/>
</dbReference>
<dbReference type="SUPFAM" id="SSF51206">
    <property type="entry name" value="cAMP-binding domain-like"/>
    <property type="match status" value="1"/>
</dbReference>
<dbReference type="SUPFAM" id="SSF81324">
    <property type="entry name" value="Voltage-gated potassium channels"/>
    <property type="match status" value="1"/>
</dbReference>
<dbReference type="PROSITE" id="PS00888">
    <property type="entry name" value="CNMP_BINDING_1"/>
    <property type="match status" value="1"/>
</dbReference>
<dbReference type="PROSITE" id="PS00889">
    <property type="entry name" value="CNMP_BINDING_2"/>
    <property type="match status" value="1"/>
</dbReference>
<dbReference type="PROSITE" id="PS50042">
    <property type="entry name" value="CNMP_BINDING_3"/>
    <property type="match status" value="1"/>
</dbReference>